<proteinExistence type="evidence at protein level"/>
<accession>P81383</accession>
<accession>A8QL50</accession>
<feature type="signal peptide" evidence="4 9 10">
    <location>
        <begin position="1"/>
        <end position="20"/>
    </location>
</feature>
<feature type="chain" id="PRO_0000099871" description="L-amino-acid oxidase" evidence="14 17 18">
    <location>
        <begin position="21"/>
        <end position="491"/>
    </location>
</feature>
<feature type="binding site" evidence="2">
    <location>
        <begin position="61"/>
        <end position="62"/>
    </location>
    <ligand>
        <name>FAD</name>
        <dbReference type="ChEBI" id="CHEBI:57692"/>
    </ligand>
</feature>
<feature type="binding site" evidence="2">
    <location>
        <begin position="81"/>
        <end position="82"/>
    </location>
    <ligand>
        <name>FAD</name>
        <dbReference type="ChEBI" id="CHEBI:57692"/>
    </ligand>
</feature>
<feature type="binding site" evidence="2">
    <location>
        <position position="89"/>
    </location>
    <ligand>
        <name>FAD</name>
        <dbReference type="ChEBI" id="CHEBI:57692"/>
    </ligand>
</feature>
<feature type="binding site" evidence="2">
    <location>
        <begin position="103"/>
        <end position="106"/>
    </location>
    <ligand>
        <name>FAD</name>
        <dbReference type="ChEBI" id="CHEBI:57692"/>
    </ligand>
</feature>
<feature type="binding site" evidence="2">
    <location>
        <position position="106"/>
    </location>
    <ligand>
        <name>substrate</name>
    </ligand>
</feature>
<feature type="binding site" evidence="2">
    <location>
        <position position="269"/>
    </location>
    <ligand>
        <name>FAD</name>
        <dbReference type="ChEBI" id="CHEBI:57692"/>
    </ligand>
</feature>
<feature type="binding site" evidence="1">
    <location>
        <position position="380"/>
    </location>
    <ligand>
        <name>substrate</name>
    </ligand>
</feature>
<feature type="binding site" evidence="2">
    <location>
        <position position="465"/>
    </location>
    <ligand>
        <name>FAD</name>
        <dbReference type="ChEBI" id="CHEBI:57692"/>
    </ligand>
</feature>
<feature type="binding site" evidence="2">
    <location>
        <begin position="472"/>
        <end position="477"/>
    </location>
    <ligand>
        <name>FAD</name>
        <dbReference type="ChEBI" id="CHEBI:57692"/>
    </ligand>
</feature>
<feature type="binding site" evidence="2">
    <location>
        <begin position="472"/>
        <end position="473"/>
    </location>
    <ligand>
        <name>substrate</name>
    </ligand>
</feature>
<feature type="glycosylation site" description="N-linked (GlcNAc...) asparagine" evidence="3">
    <location>
        <position position="122"/>
    </location>
</feature>
<feature type="glycosylation site" description="N-linked (GlcNAc...) asparagine" evidence="3">
    <location>
        <position position="238"/>
    </location>
</feature>
<feature type="glycosylation site" description="N-linked (GlcNAc...) asparagine" evidence="3">
    <location>
        <position position="266"/>
    </location>
</feature>
<feature type="glycosylation site" description="N-linked (GlcNAc...) asparagine" evidence="3">
    <location>
        <position position="410"/>
    </location>
</feature>
<feature type="disulfide bond" evidence="2">
    <location>
        <begin position="28"/>
        <end position="182"/>
    </location>
</feature>
<feature type="disulfide bond" evidence="2">
    <location>
        <begin position="338"/>
        <end position="420"/>
    </location>
</feature>
<feature type="sequence conflict" description="In Ref. 3; AA sequence." evidence="13" ref="3">
    <original>H</original>
    <variation>S</variation>
    <location>
        <position position="21"/>
    </location>
</feature>
<feature type="sequence conflict" description="In Ref. 2; AA sequence and 3; AA sequence." evidence="13" ref="2 3">
    <original>C</original>
    <variation>S</variation>
    <location>
        <position position="28"/>
    </location>
</feature>
<feature type="sequence conflict" description="In Ref. 2; AA sequence." evidence="13" ref="2">
    <original>W</original>
    <variation>H</variation>
    <location>
        <position position="37"/>
    </location>
</feature>
<comment type="function">
    <text evidence="4 5 6 7 8 10">Catalyzes an oxidative deamination of predominantly hydrophobic and aromatic L-amino acids, thus producing hydrogen peroxide that may contribute to the diverse toxic effects of this enzyme (PubMed:17543361, PubMed:2044840). Is very active against L-Lys, L-Phe, L-Leu, L-Tyr, L-Trp, L-Arg, and L-Met, moderately active against L-His, L-cystine, and L-Ile, and slightly active against L-Gln, L-Asn, L-Ala, and L-Val (PubMed:2044840). L-Glu, L-Ser, L-Pro and Gly are oxidized very slowly (PubMed:2044840). Its activity on platelet aggregation is controversial. It has potent inhibitory activity on platelet aggregation induced by ADP and the thromboxane analog U46619, but not by thrombin, mucetin, ristocetin and stejnulxin (PubMed:17543361), but it has also been shown to induce platelet aggregation through the formation of hydrogen peroxide (PubMed:7886693). It binds to bacteria and shows antibacterial activities by generating hydrogen peroxide. Binding and antibacterial activities are higher against Gram-positive than against Gram-negative bacteria. May also have an ability to induce hemorrhage, hemolysis, edema, apoptosis.</text>
</comment>
<comment type="catalytic activity">
    <reaction evidence="4 5">
        <text>an L-alpha-amino acid + O2 + H2O = a 2-oxocarboxylate + H2O2 + NH4(+)</text>
        <dbReference type="Rhea" id="RHEA:13781"/>
        <dbReference type="ChEBI" id="CHEBI:15377"/>
        <dbReference type="ChEBI" id="CHEBI:15379"/>
        <dbReference type="ChEBI" id="CHEBI:16240"/>
        <dbReference type="ChEBI" id="CHEBI:28938"/>
        <dbReference type="ChEBI" id="CHEBI:35179"/>
        <dbReference type="ChEBI" id="CHEBI:59869"/>
        <dbReference type="EC" id="1.4.3.2"/>
    </reaction>
</comment>
<comment type="catalytic activity">
    <reaction evidence="5">
        <text>L-leucine + O2 + H2O = 4-methyl-2-oxopentanoate + H2O2 + NH4(+)</text>
        <dbReference type="Rhea" id="RHEA:60996"/>
        <dbReference type="ChEBI" id="CHEBI:15377"/>
        <dbReference type="ChEBI" id="CHEBI:15379"/>
        <dbReference type="ChEBI" id="CHEBI:16240"/>
        <dbReference type="ChEBI" id="CHEBI:17865"/>
        <dbReference type="ChEBI" id="CHEBI:28938"/>
        <dbReference type="ChEBI" id="CHEBI:57427"/>
    </reaction>
</comment>
<comment type="catalytic activity">
    <reaction evidence="5">
        <text>L-phenylalanine + O2 + H2O = 3-phenylpyruvate + H2O2 + NH4(+)</text>
        <dbReference type="Rhea" id="RHEA:61240"/>
        <dbReference type="ChEBI" id="CHEBI:15377"/>
        <dbReference type="ChEBI" id="CHEBI:15379"/>
        <dbReference type="ChEBI" id="CHEBI:16240"/>
        <dbReference type="ChEBI" id="CHEBI:18005"/>
        <dbReference type="ChEBI" id="CHEBI:28938"/>
        <dbReference type="ChEBI" id="CHEBI:58095"/>
    </reaction>
</comment>
<comment type="catalytic activity">
    <reaction evidence="5">
        <text>L-tryptophan + O2 + H2O = indole-3-pyruvate + H2O2 + NH4(+)</text>
        <dbReference type="Rhea" id="RHEA:61244"/>
        <dbReference type="ChEBI" id="CHEBI:15377"/>
        <dbReference type="ChEBI" id="CHEBI:15379"/>
        <dbReference type="ChEBI" id="CHEBI:16240"/>
        <dbReference type="ChEBI" id="CHEBI:17640"/>
        <dbReference type="ChEBI" id="CHEBI:28938"/>
        <dbReference type="ChEBI" id="CHEBI:57912"/>
    </reaction>
</comment>
<comment type="catalytic activity">
    <reaction evidence="5">
        <text>L-methionine + O2 + H2O = 4-methylsulfanyl-2-oxobutanoate + H2O2 + NH4(+)</text>
        <dbReference type="Rhea" id="RHEA:61236"/>
        <dbReference type="ChEBI" id="CHEBI:15377"/>
        <dbReference type="ChEBI" id="CHEBI:15379"/>
        <dbReference type="ChEBI" id="CHEBI:16240"/>
        <dbReference type="ChEBI" id="CHEBI:16723"/>
        <dbReference type="ChEBI" id="CHEBI:28938"/>
        <dbReference type="ChEBI" id="CHEBI:57844"/>
    </reaction>
</comment>
<comment type="catalytic activity">
    <reaction evidence="5">
        <text>L-isoleucine + O2 + H2O = (S)-3-methyl-2-oxopentanoate + H2O2 + NH4(+)</text>
        <dbReference type="Rhea" id="RHEA:61232"/>
        <dbReference type="ChEBI" id="CHEBI:15377"/>
        <dbReference type="ChEBI" id="CHEBI:15379"/>
        <dbReference type="ChEBI" id="CHEBI:16240"/>
        <dbReference type="ChEBI" id="CHEBI:28938"/>
        <dbReference type="ChEBI" id="CHEBI:35146"/>
        <dbReference type="ChEBI" id="CHEBI:58045"/>
    </reaction>
</comment>
<comment type="catalytic activity">
    <reaction evidence="5">
        <text>L-arginine + O2 + H2O = 5-guanidino-2-oxopentanoate + H2O2 + NH4(+)</text>
        <dbReference type="Rhea" id="RHEA:51404"/>
        <dbReference type="ChEBI" id="CHEBI:15377"/>
        <dbReference type="ChEBI" id="CHEBI:15379"/>
        <dbReference type="ChEBI" id="CHEBI:16240"/>
        <dbReference type="ChEBI" id="CHEBI:28938"/>
        <dbReference type="ChEBI" id="CHEBI:32682"/>
        <dbReference type="ChEBI" id="CHEBI:58489"/>
    </reaction>
</comment>
<comment type="catalytic activity">
    <reaction evidence="5">
        <text>L-histidine + O2 + H2O = 3-(imidazol-5-yl)pyruvate + H2O2 + NH4(+)</text>
        <dbReference type="Rhea" id="RHEA:61228"/>
        <dbReference type="ChEBI" id="CHEBI:15377"/>
        <dbReference type="ChEBI" id="CHEBI:15379"/>
        <dbReference type="ChEBI" id="CHEBI:16240"/>
        <dbReference type="ChEBI" id="CHEBI:28938"/>
        <dbReference type="ChEBI" id="CHEBI:57595"/>
        <dbReference type="ChEBI" id="CHEBI:58133"/>
    </reaction>
</comment>
<comment type="catalytic activity">
    <reaction evidence="5">
        <text>L-tyrosine + O2 + H2O = 3-(4-hydroxyphenyl)pyruvate + H2O2 + NH4(+)</text>
        <dbReference type="Rhea" id="RHEA:61248"/>
        <dbReference type="ChEBI" id="CHEBI:15377"/>
        <dbReference type="ChEBI" id="CHEBI:15379"/>
        <dbReference type="ChEBI" id="CHEBI:16240"/>
        <dbReference type="ChEBI" id="CHEBI:28938"/>
        <dbReference type="ChEBI" id="CHEBI:36242"/>
        <dbReference type="ChEBI" id="CHEBI:58315"/>
    </reaction>
</comment>
<comment type="catalytic activity">
    <reaction evidence="5">
        <text>L-cystine + O2 + H2O = (2R)-2-amino-2-carboxylatoethyl-disulfanyl-oxopropanoate + H2O2 + NH4(+)</text>
        <dbReference type="Rhea" id="RHEA:61284"/>
        <dbReference type="ChEBI" id="CHEBI:15377"/>
        <dbReference type="ChEBI" id="CHEBI:15379"/>
        <dbReference type="ChEBI" id="CHEBI:16240"/>
        <dbReference type="ChEBI" id="CHEBI:28938"/>
        <dbReference type="ChEBI" id="CHEBI:35491"/>
        <dbReference type="ChEBI" id="CHEBI:144484"/>
    </reaction>
</comment>
<comment type="catalytic activity">
    <reaction evidence="5">
        <text>L-lysine + O2 + H2O = 6-amino-2-oxohexanoate + H2O2 + NH4(+)</text>
        <dbReference type="Rhea" id="RHEA:14437"/>
        <dbReference type="ChEBI" id="CHEBI:15377"/>
        <dbReference type="ChEBI" id="CHEBI:15379"/>
        <dbReference type="ChEBI" id="CHEBI:16240"/>
        <dbReference type="ChEBI" id="CHEBI:28938"/>
        <dbReference type="ChEBI" id="CHEBI:32551"/>
        <dbReference type="ChEBI" id="CHEBI:58183"/>
    </reaction>
</comment>
<comment type="cofactor">
    <cofactor evidence="7 9">
        <name>FAD</name>
        <dbReference type="ChEBI" id="CHEBI:57692"/>
    </cofactor>
</comment>
<comment type="biophysicochemical properties">
    <kinetics>
        <KM evidence="4">2.3 mM for L-His</KM>
        <KM evidence="5">3 mM for L-His</KM>
        <KM evidence="4">2.9 mM for L-Ile</KM>
        <KM evidence="5">1.3 mM for L-Ile</KM>
        <KM evidence="4">2.2 mM for L-Leu</KM>
        <KM evidence="5">0.2 mM for L-Leu</KM>
        <KM evidence="4">2.6 mM for L-Lys</KM>
        <KM evidence="5">0.14 mM for L-Lys</KM>
        <KM evidence="4">0.7 mM for L-Met</KM>
        <KM evidence="5">0.01 mM for L-Tyr</KM>
        <KM evidence="5">0.1 mM for L-Trp</KM>
        <KM evidence="5">0.1 mM for L-Phe</KM>
        <KM evidence="5">0.15 mM for L-Arg</KM>
        <KM evidence="5">0.17 mM for L-ornithine</KM>
        <KM evidence="5">0.35 mM for L-norleucine (L-2-aminohexanoate)</KM>
        <KM evidence="5">0.63 mM for L-Met</KM>
        <KM evidence="5">0.67 mM for L-norvaline (L-2-aminopentanoate)</KM>
        <KM evidence="5">0.83 mM for L-cystine</KM>
        <KM evidence="5">4 mM for L-Aminobutyric acid</KM>
        <KM evidence="5">5 mM for L-Pro</KM>
        <KM evidence="5">7.1 mM for L-Val</KM>
        <KM evidence="5">7.8 mM for L-Glu</KM>
        <KM evidence="5">12.5 mM for L-Ala</KM>
        <KM evidence="5">20 mM for L-Gln</KM>
        <KM evidence="5">22.2 mM for L-Asn</KM>
        <KM evidence="5">28.6 mM for L-Ser</KM>
        <KM evidence="5">31 mM for L-Gly</KM>
    </kinetics>
    <temperatureDependence>
        <text evidence="7">Exhibits unusual thermal stability. At pH 7.4, the enzyme retains full activity after incubation at 25 degrees Celsius for 30 days. Is stable at alkaline condition and is not inactivated by freezing.</text>
    </temperatureDependence>
</comment>
<comment type="subunit">
    <text evidence="5 7 9 10">Homodimer; non-covalently linked.</text>
</comment>
<comment type="subcellular location">
    <subcellularLocation>
        <location evidence="5">Secreted</location>
    </subcellularLocation>
</comment>
<comment type="tissue specificity">
    <text evidence="15">Expressed by the venom gland.</text>
</comment>
<comment type="PTM">
    <text evidence="14 16 17 18">N-glycosylated.</text>
</comment>
<comment type="toxic dose">
    <text evidence="7">LD(50) is 5 mg/kg by intravenous injection into mice.</text>
</comment>
<comment type="similarity">
    <text evidence="13">Belongs to the flavin monoamine oxidase family. FIG1 subfamily.</text>
</comment>
<comment type="caution">
    <text evidence="19">The existence of two isoforms has been reported, and could explain the differences in sequence and kinetic parameters.</text>
</comment>
<evidence type="ECO:0000250" key="1"/>
<evidence type="ECO:0000250" key="2">
    <source>
        <dbReference type="UniProtKB" id="P81382"/>
    </source>
</evidence>
<evidence type="ECO:0000255" key="3"/>
<evidence type="ECO:0000269" key="4">
    <source>
    </source>
</evidence>
<evidence type="ECO:0000269" key="5">
    <source>
    </source>
</evidence>
<evidence type="ECO:0000269" key="6">
    <source>
    </source>
</evidence>
<evidence type="ECO:0000269" key="7">
    <source>
    </source>
</evidence>
<evidence type="ECO:0000269" key="8">
    <source>
    </source>
</evidence>
<evidence type="ECO:0000269" key="9">
    <source>
    </source>
</evidence>
<evidence type="ECO:0000269" key="10">
    <source>
    </source>
</evidence>
<evidence type="ECO:0000303" key="11">
    <source>
    </source>
</evidence>
<evidence type="ECO:0000303" key="12">
    <source>
    </source>
</evidence>
<evidence type="ECO:0000305" key="13"/>
<evidence type="ECO:0000305" key="14">
    <source>
    </source>
</evidence>
<evidence type="ECO:0000305" key="15">
    <source>
    </source>
</evidence>
<evidence type="ECO:0000305" key="16">
    <source>
    </source>
</evidence>
<evidence type="ECO:0000305" key="17">
    <source>
    </source>
</evidence>
<evidence type="ECO:0000305" key="18">
    <source>
    </source>
</evidence>
<evidence type="ECO:0000305" key="19">
    <source ref="6"/>
</evidence>
<organism>
    <name type="scientific">Ophiophagus hannah</name>
    <name type="common">King cobra</name>
    <name type="synonym">Naja hannah</name>
    <dbReference type="NCBI Taxonomy" id="8665"/>
    <lineage>
        <taxon>Eukaryota</taxon>
        <taxon>Metazoa</taxon>
        <taxon>Chordata</taxon>
        <taxon>Craniata</taxon>
        <taxon>Vertebrata</taxon>
        <taxon>Euteleostomi</taxon>
        <taxon>Lepidosauria</taxon>
        <taxon>Squamata</taxon>
        <taxon>Bifurcata</taxon>
        <taxon>Unidentata</taxon>
        <taxon>Episquamata</taxon>
        <taxon>Toxicofera</taxon>
        <taxon>Serpentes</taxon>
        <taxon>Colubroidea</taxon>
        <taxon>Elapidae</taxon>
        <taxon>Elapinae</taxon>
        <taxon>Ophiophagus</taxon>
    </lineage>
</organism>
<sequence>MNDFLLLLLVLFLGVPRSENHVINLEECFQEPEYENWLATASHGLTKTLNPKKIVIVGAGISGLTAAKLFREAGHEVVILEASDRVGGRIKTHREDGWYVDVGPMRVPQTHRIVREYIKKFNISLNPFRQTDENAWYLIKHVRQKMSANNPENFGYQLNPNERGKSASQLFDETLDKVTDDCTLQKEKYDSFSTKEYLIKEGKLSTGAVEMIGDFLNEEAGFHNSFLISVMDHFLFLNNSFDEITGGFDQLPERFFKDMDSIVHLNSTVEKIVHINNKVTVFYEGLSTNMRLVADYVLITATARATRLIKFVPPLSIPKTRALRSLIYASATKIILVCTDKFWEKDGIHGGRSITDLPSRVIYYPNHDFTNGIGVLLASYTWYSDSEFYTTLSDEKCVDVVMDDLVEIHNVSKDYLKSVCGKHVVQKWALDQYSMGAFSTYTPYQITHYSQMLAQNEGRIYFAGEYTAHPHGWIETSMKSAIREAINIHNA</sequence>
<reference key="1">
    <citation type="journal article" date="2007" name="Toxicon">
        <title>Molecular characterization of L-amino acid oxidase from king cobra venom.</title>
        <authorList>
            <person name="Jin Y."/>
            <person name="Lee W.-H."/>
            <person name="Zeng L."/>
            <person name="Zhang Y."/>
        </authorList>
    </citation>
    <scope>NUCLEOTIDE SEQUENCE [MRNA]</scope>
    <scope>PROTEIN SEQUENCE OF 21-45; 121-129; 189-195; 272-278 AND 428-439</scope>
    <scope>IDENTIFICATION BY MASS SPECTROMETRY</scope>
    <scope>GLYCOSYLATION</scope>
    <scope>BIOPHYSICOCHEMICAL PROPERTIES</scope>
    <scope>SUBSTRATE SPECIFICITY</scope>
    <scope>CATALYTIC ACTIVITY</scope>
    <source>
        <tissue>Venom</tissue>
        <tissue>Venom gland</tissue>
    </source>
</reference>
<reference key="2">
    <citation type="journal article" date="1994" name="Arch. Biochem. Biophys.">
        <title>Purification and properties of the L-amino acid oxidase from Malayan pit viper (Calloselasma rhodostoma) venom.</title>
        <authorList>
            <person name="Ponnudurai G."/>
            <person name="Chung M.C.M."/>
            <person name="Tan N.-H."/>
        </authorList>
    </citation>
    <scope>PROTEIN SEQUENCE OF 21-39</scope>
    <scope>SUBUNIT</scope>
    <scope>GLYCOSYLATION</scope>
    <scope>COFACTOR</scope>
    <source>
        <tissue>Venom</tissue>
    </source>
</reference>
<reference key="3">
    <citation type="journal article" date="1997" name="Int. J. Biochem. Cell Biol.">
        <title>Characterization and cytotoxicity of L-amino acid oxidase from the venom of king cobra (Ophiophagus hannah).</title>
        <authorList>
            <person name="Ahn M.Y."/>
            <person name="Lee B.M."/>
            <person name="Kim Y.S."/>
        </authorList>
    </citation>
    <scope>PROTEIN SEQUENCE OF 21-35</scope>
    <scope>FUNCTION</scope>
    <scope>SUBUNIT</scope>
    <scope>GLYCOSYLATION</scope>
    <source>
        <tissue>Venom</tissue>
    </source>
</reference>
<reference key="4">
    <citation type="journal article" date="1989" name="Biochem. Int.">
        <title>Isolation and characterization of an unusual form of L-amino acid oxidase from King cobra (Ophiophagus hannah) venom.</title>
        <authorList>
            <person name="Tan N.H."/>
            <person name="Saifuddin M.N."/>
        </authorList>
    </citation>
    <scope>FUNCTION</scope>
    <scope>COFACTOR</scope>
    <scope>SUBUNIT</scope>
    <scope>BIOPHYSICOCHEMICAL PROPERTIES</scope>
    <scope>GLYCOSYLATION</scope>
    <scope>TOXIC DOSE</scope>
</reference>
<reference key="5">
    <citation type="journal article" date="1991" name="Int. J. Biochem.">
        <title>Substrate specificity of king cobra (Ophiophagus hannah) venom L-amino acid oxidase.</title>
        <authorList>
            <person name="Tan N.H."/>
            <person name="Saifuddin M.N."/>
        </authorList>
    </citation>
    <scope>FUNCTION</scope>
    <scope>SUBUNIT</scope>
    <scope>BIOPHYSICOCHEMICAL PROPERTIES</scope>
    <scope>SUBSTRATE SPECIFICITY</scope>
    <scope>CATALYTIC ACTIVITY</scope>
    <scope>SUBCELLULAR LOCATION</scope>
    <source>
        <tissue>Venom</tissue>
    </source>
</reference>
<reference key="6">
    <citation type="journal article" date="1994" name="Toxicon">
        <title>The edema inducing activity of Ophiophagus hannah (king cobra) venom L-amino acid oxidase.</title>
        <authorList>
            <person name="Tan N.-H."/>
            <person name="Choy S.-K."/>
        </authorList>
    </citation>
    <scope>ISOFORM</scope>
</reference>
<reference key="7">
    <citation type="journal article" date="1994" name="Toxicon">
        <title>Purification and characterization of L-amino acid oxidase from king cobra (Ophiophagus hannah) venom and its effects on human platelet aggregation.</title>
        <authorList>
            <person name="Li Z.Y."/>
            <person name="Yu T.F."/>
            <person name="Lian E.C."/>
        </authorList>
    </citation>
    <scope>FUNCTION</scope>
    <source>
        <tissue>Venom</tissue>
    </source>
</reference>
<reference key="8">
    <citation type="journal article" date="2011" name="Comp. Biochem. Physiol.">
        <title>Antibacterial action of a heat-stable form of L-amino acid oxidase isolated from king cobra (Ophiophagus hannah) venom.</title>
        <authorList>
            <person name="Lee M.L."/>
            <person name="Tan N.H."/>
            <person name="Fung S.Y."/>
            <person name="Sekaran S.D."/>
        </authorList>
    </citation>
    <scope>FUNCTION</scope>
    <scope>ANTIBACTERIAL ACTIVITY</scope>
    <source>
        <tissue>Venom</tissue>
    </source>
</reference>
<reference key="9">
    <citation type="journal article" date="2013" name="Proc. Natl. Acad. Sci. U.S.A.">
        <title>The king cobra genome reveals dynamic gene evolution and adaptation in the snake venom system.</title>
        <authorList>
            <person name="Vonk F.J."/>
            <person name="Casewell N.R."/>
            <person name="Henkel C.V."/>
            <person name="Heimberg A.M."/>
            <person name="Jansen H.J."/>
            <person name="McCleary R.J."/>
            <person name="Kerkkamp H.M."/>
            <person name="Vos R.A."/>
            <person name="Guerreiro I."/>
            <person name="Calvete J.J."/>
            <person name="Wuster W."/>
            <person name="Woods A.E."/>
            <person name="Logan J.M."/>
            <person name="Harrison R.A."/>
            <person name="Castoe T.A."/>
            <person name="de Koning A.P."/>
            <person name="Pollock D.D."/>
            <person name="Yandell M."/>
            <person name="Calderon D."/>
            <person name="Renjifo C."/>
            <person name="Currier R.B."/>
            <person name="Salgado D."/>
            <person name="Pla D."/>
            <person name="Sanz L."/>
            <person name="Hyder A.S."/>
            <person name="Ribeiro J.M."/>
            <person name="Arntzen J.W."/>
            <person name="van den Thillart G.E."/>
            <person name="Boetzer M."/>
            <person name="Pirovano W."/>
            <person name="Dirks R.P."/>
            <person name="Spaink H.P."/>
            <person name="Duboule D."/>
            <person name="McGlinn E."/>
            <person name="Kini R.M."/>
            <person name="Richardson M.K."/>
        </authorList>
    </citation>
    <scope>IDENTIFICATION BY MASS SPECTROMETRY</scope>
    <source>
        <tissue>Venom</tissue>
    </source>
</reference>
<dbReference type="EC" id="1.4.3.2" evidence="4 5"/>
<dbReference type="EMBL" id="EF080831">
    <property type="protein sequence ID" value="ABN72538.1"/>
    <property type="molecule type" value="mRNA"/>
</dbReference>
<dbReference type="SMR" id="P81383"/>
<dbReference type="TopDownProteomics" id="P81383"/>
<dbReference type="BRENDA" id="1.4.3.2">
    <property type="organism ID" value="4419"/>
</dbReference>
<dbReference type="SABIO-RK" id="P81383"/>
<dbReference type="GO" id="GO:0005576">
    <property type="term" value="C:extracellular region"/>
    <property type="evidence" value="ECO:0000314"/>
    <property type="project" value="UniProtKB"/>
</dbReference>
<dbReference type="GO" id="GO:0003677">
    <property type="term" value="F:DNA binding"/>
    <property type="evidence" value="ECO:0000314"/>
    <property type="project" value="UniProtKB"/>
</dbReference>
<dbReference type="GO" id="GO:0050660">
    <property type="term" value="F:flavin adenine dinucleotide binding"/>
    <property type="evidence" value="ECO:0000314"/>
    <property type="project" value="UniProtKB"/>
</dbReference>
<dbReference type="GO" id="GO:0001716">
    <property type="term" value="F:L-amino-acid oxidase activity"/>
    <property type="evidence" value="ECO:0000314"/>
    <property type="project" value="UniProtKB"/>
</dbReference>
<dbReference type="GO" id="GO:0050029">
    <property type="term" value="F:L-lysine oxidase activity"/>
    <property type="evidence" value="ECO:0007669"/>
    <property type="project" value="RHEA"/>
</dbReference>
<dbReference type="GO" id="GO:0106329">
    <property type="term" value="F:L-phenylalaine oxidase activity"/>
    <property type="evidence" value="ECO:0007669"/>
    <property type="project" value="RHEA"/>
</dbReference>
<dbReference type="GO" id="GO:0090729">
    <property type="term" value="F:toxin activity"/>
    <property type="evidence" value="ECO:0000314"/>
    <property type="project" value="UniProtKB"/>
</dbReference>
<dbReference type="GO" id="GO:0009063">
    <property type="term" value="P:amino acid catabolic process"/>
    <property type="evidence" value="ECO:0007669"/>
    <property type="project" value="TreeGrafter"/>
</dbReference>
<dbReference type="GO" id="GO:0006915">
    <property type="term" value="P:apoptotic process"/>
    <property type="evidence" value="ECO:0007669"/>
    <property type="project" value="UniProtKB-KW"/>
</dbReference>
<dbReference type="GO" id="GO:0042742">
    <property type="term" value="P:defense response to bacterium"/>
    <property type="evidence" value="ECO:0007669"/>
    <property type="project" value="UniProtKB-KW"/>
</dbReference>
<dbReference type="GO" id="GO:0031640">
    <property type="term" value="P:killing of cells of another organism"/>
    <property type="evidence" value="ECO:0000314"/>
    <property type="project" value="UniProtKB"/>
</dbReference>
<dbReference type="FunFam" id="1.10.405.10:FF:000004">
    <property type="entry name" value="Amine oxidase"/>
    <property type="match status" value="1"/>
</dbReference>
<dbReference type="Gene3D" id="3.90.660.10">
    <property type="match status" value="1"/>
</dbReference>
<dbReference type="Gene3D" id="3.50.50.60">
    <property type="entry name" value="FAD/NAD(P)-binding domain"/>
    <property type="match status" value="1"/>
</dbReference>
<dbReference type="Gene3D" id="1.10.405.10">
    <property type="entry name" value="Guanine Nucleotide Dissociation Inhibitor, domain 1"/>
    <property type="match status" value="1"/>
</dbReference>
<dbReference type="InterPro" id="IPR002937">
    <property type="entry name" value="Amino_oxidase"/>
</dbReference>
<dbReference type="InterPro" id="IPR036188">
    <property type="entry name" value="FAD/NAD-bd_sf"/>
</dbReference>
<dbReference type="InterPro" id="IPR001613">
    <property type="entry name" value="Flavin_amine_oxidase"/>
</dbReference>
<dbReference type="InterPro" id="IPR050281">
    <property type="entry name" value="Flavin_monoamine_oxidase"/>
</dbReference>
<dbReference type="PANTHER" id="PTHR10742:SF355">
    <property type="entry name" value="AMINE OXIDASE"/>
    <property type="match status" value="1"/>
</dbReference>
<dbReference type="PANTHER" id="PTHR10742">
    <property type="entry name" value="FLAVIN MONOAMINE OXIDASE"/>
    <property type="match status" value="1"/>
</dbReference>
<dbReference type="Pfam" id="PF01593">
    <property type="entry name" value="Amino_oxidase"/>
    <property type="match status" value="1"/>
</dbReference>
<dbReference type="PRINTS" id="PR00757">
    <property type="entry name" value="AMINEOXDASEF"/>
</dbReference>
<dbReference type="SUPFAM" id="SSF54373">
    <property type="entry name" value="FAD-linked reductases, C-terminal domain"/>
    <property type="match status" value="1"/>
</dbReference>
<dbReference type="SUPFAM" id="SSF51905">
    <property type="entry name" value="FAD/NAD(P)-binding domain"/>
    <property type="match status" value="1"/>
</dbReference>
<keyword id="KW-0044">Antibiotic</keyword>
<keyword id="KW-0929">Antimicrobial</keyword>
<keyword id="KW-0053">Apoptosis</keyword>
<keyword id="KW-0204">Cytolysis</keyword>
<keyword id="KW-0903">Direct protein sequencing</keyword>
<keyword id="KW-1015">Disulfide bond</keyword>
<keyword id="KW-0274">FAD</keyword>
<keyword id="KW-0285">Flavoprotein</keyword>
<keyword id="KW-0325">Glycoprotein</keyword>
<keyword id="KW-0354">Hemolysis</keyword>
<keyword id="KW-1199">Hemostasis impairing toxin</keyword>
<keyword id="KW-0560">Oxidoreductase</keyword>
<keyword id="KW-1201">Platelet aggregation inhibiting toxin</keyword>
<keyword id="KW-0964">Secreted</keyword>
<keyword id="KW-0732">Signal</keyword>
<keyword id="KW-0800">Toxin</keyword>
<protein>
    <recommendedName>
        <fullName evidence="12">L-amino-acid oxidase</fullName>
        <shortName>LAO</shortName>
        <shortName evidence="11">Oh-LAAO</shortName>
        <ecNumber evidence="4 5">1.4.3.2</ecNumber>
    </recommendedName>
</protein>
<name>OXLA_OPHHA</name>